<organism>
    <name type="scientific">Ectopseudomonas mendocina (strain ymp)</name>
    <name type="common">Pseudomonas mendocina</name>
    <dbReference type="NCBI Taxonomy" id="399739"/>
    <lineage>
        <taxon>Bacteria</taxon>
        <taxon>Pseudomonadati</taxon>
        <taxon>Pseudomonadota</taxon>
        <taxon>Gammaproteobacteria</taxon>
        <taxon>Pseudomonadales</taxon>
        <taxon>Pseudomonadaceae</taxon>
        <taxon>Ectopseudomonas</taxon>
    </lineage>
</organism>
<dbReference type="EC" id="4.6.1.12" evidence="1"/>
<dbReference type="EMBL" id="CP000680">
    <property type="protein sequence ID" value="ABP85780.1"/>
    <property type="molecule type" value="Genomic_DNA"/>
</dbReference>
<dbReference type="SMR" id="A4XWR4"/>
<dbReference type="STRING" id="399739.Pmen_3026"/>
<dbReference type="KEGG" id="pmy:Pmen_3026"/>
<dbReference type="PATRIC" id="fig|399739.8.peg.3072"/>
<dbReference type="eggNOG" id="COG0245">
    <property type="taxonomic scope" value="Bacteria"/>
</dbReference>
<dbReference type="HOGENOM" id="CLU_084630_2_0_6"/>
<dbReference type="OrthoDB" id="9804336at2"/>
<dbReference type="UniPathway" id="UPA00056">
    <property type="reaction ID" value="UER00095"/>
</dbReference>
<dbReference type="GO" id="GO:0008685">
    <property type="term" value="F:2-C-methyl-D-erythritol 2,4-cyclodiphosphate synthase activity"/>
    <property type="evidence" value="ECO:0007669"/>
    <property type="project" value="UniProtKB-UniRule"/>
</dbReference>
<dbReference type="GO" id="GO:0046872">
    <property type="term" value="F:metal ion binding"/>
    <property type="evidence" value="ECO:0007669"/>
    <property type="project" value="UniProtKB-KW"/>
</dbReference>
<dbReference type="GO" id="GO:0019288">
    <property type="term" value="P:isopentenyl diphosphate biosynthetic process, methylerythritol 4-phosphate pathway"/>
    <property type="evidence" value="ECO:0007669"/>
    <property type="project" value="UniProtKB-UniRule"/>
</dbReference>
<dbReference type="GO" id="GO:0016114">
    <property type="term" value="P:terpenoid biosynthetic process"/>
    <property type="evidence" value="ECO:0007669"/>
    <property type="project" value="InterPro"/>
</dbReference>
<dbReference type="CDD" id="cd00554">
    <property type="entry name" value="MECDP_synthase"/>
    <property type="match status" value="1"/>
</dbReference>
<dbReference type="FunFam" id="3.30.1330.50:FF:000001">
    <property type="entry name" value="2-C-methyl-D-erythritol 2,4-cyclodiphosphate synthase"/>
    <property type="match status" value="1"/>
</dbReference>
<dbReference type="Gene3D" id="3.30.1330.50">
    <property type="entry name" value="2-C-methyl-D-erythritol 2,4-cyclodiphosphate synthase"/>
    <property type="match status" value="1"/>
</dbReference>
<dbReference type="HAMAP" id="MF_00107">
    <property type="entry name" value="IspF"/>
    <property type="match status" value="1"/>
</dbReference>
<dbReference type="InterPro" id="IPR003526">
    <property type="entry name" value="MECDP_synthase"/>
</dbReference>
<dbReference type="InterPro" id="IPR020555">
    <property type="entry name" value="MECDP_synthase_CS"/>
</dbReference>
<dbReference type="InterPro" id="IPR036571">
    <property type="entry name" value="MECDP_synthase_sf"/>
</dbReference>
<dbReference type="NCBIfam" id="TIGR00151">
    <property type="entry name" value="ispF"/>
    <property type="match status" value="1"/>
</dbReference>
<dbReference type="PANTHER" id="PTHR43181">
    <property type="entry name" value="2-C-METHYL-D-ERYTHRITOL 2,4-CYCLODIPHOSPHATE SYNTHASE, CHLOROPLASTIC"/>
    <property type="match status" value="1"/>
</dbReference>
<dbReference type="PANTHER" id="PTHR43181:SF1">
    <property type="entry name" value="2-C-METHYL-D-ERYTHRITOL 2,4-CYCLODIPHOSPHATE SYNTHASE, CHLOROPLASTIC"/>
    <property type="match status" value="1"/>
</dbReference>
<dbReference type="Pfam" id="PF02542">
    <property type="entry name" value="YgbB"/>
    <property type="match status" value="1"/>
</dbReference>
<dbReference type="SUPFAM" id="SSF69765">
    <property type="entry name" value="IpsF-like"/>
    <property type="match status" value="1"/>
</dbReference>
<dbReference type="PROSITE" id="PS01350">
    <property type="entry name" value="ISPF"/>
    <property type="match status" value="1"/>
</dbReference>
<evidence type="ECO:0000255" key="1">
    <source>
        <dbReference type="HAMAP-Rule" id="MF_00107"/>
    </source>
</evidence>
<accession>A4XWR4</accession>
<proteinExistence type="inferred from homology"/>
<protein>
    <recommendedName>
        <fullName evidence="1">2-C-methyl-D-erythritol 2,4-cyclodiphosphate synthase</fullName>
        <shortName evidence="1">MECDP-synthase</shortName>
        <shortName evidence="1">MECPP-synthase</shortName>
        <shortName evidence="1">MECPS</shortName>
        <ecNumber evidence="1">4.6.1.12</ecNumber>
    </recommendedName>
</protein>
<keyword id="KW-0414">Isoprene biosynthesis</keyword>
<keyword id="KW-0456">Lyase</keyword>
<keyword id="KW-0479">Metal-binding</keyword>
<gene>
    <name evidence="1" type="primary">ispF</name>
    <name type="ordered locus">Pmen_3026</name>
</gene>
<comment type="function">
    <text evidence="1">Involved in the biosynthesis of isopentenyl diphosphate (IPP) and dimethylallyl diphosphate (DMAPP), two major building blocks of isoprenoid compounds. Catalyzes the conversion of 4-diphosphocytidyl-2-C-methyl-D-erythritol 2-phosphate (CDP-ME2P) to 2-C-methyl-D-erythritol 2,4-cyclodiphosphate (ME-CPP) with a corresponding release of cytidine 5-monophosphate (CMP).</text>
</comment>
<comment type="catalytic activity">
    <reaction evidence="1">
        <text>4-CDP-2-C-methyl-D-erythritol 2-phosphate = 2-C-methyl-D-erythritol 2,4-cyclic diphosphate + CMP</text>
        <dbReference type="Rhea" id="RHEA:23864"/>
        <dbReference type="ChEBI" id="CHEBI:57919"/>
        <dbReference type="ChEBI" id="CHEBI:58483"/>
        <dbReference type="ChEBI" id="CHEBI:60377"/>
        <dbReference type="EC" id="4.6.1.12"/>
    </reaction>
</comment>
<comment type="cofactor">
    <cofactor evidence="1">
        <name>a divalent metal cation</name>
        <dbReference type="ChEBI" id="CHEBI:60240"/>
    </cofactor>
    <text evidence="1">Binds 1 divalent metal cation per subunit.</text>
</comment>
<comment type="pathway">
    <text evidence="1">Isoprenoid biosynthesis; isopentenyl diphosphate biosynthesis via DXP pathway; isopentenyl diphosphate from 1-deoxy-D-xylulose 5-phosphate: step 4/6.</text>
</comment>
<comment type="subunit">
    <text evidence="1">Homotrimer.</text>
</comment>
<comment type="similarity">
    <text evidence="1">Belongs to the IspF family.</text>
</comment>
<reference key="1">
    <citation type="submission" date="2007-04" db="EMBL/GenBank/DDBJ databases">
        <title>Complete sequence of Pseudomonas mendocina ymp.</title>
        <authorList>
            <consortium name="US DOE Joint Genome Institute"/>
            <person name="Copeland A."/>
            <person name="Lucas S."/>
            <person name="Lapidus A."/>
            <person name="Barry K."/>
            <person name="Glavina del Rio T."/>
            <person name="Dalin E."/>
            <person name="Tice H."/>
            <person name="Pitluck S."/>
            <person name="Kiss H."/>
            <person name="Brettin T."/>
            <person name="Detter J.C."/>
            <person name="Bruce D."/>
            <person name="Han C."/>
            <person name="Schmutz J."/>
            <person name="Larimer F."/>
            <person name="Land M."/>
            <person name="Hauser L."/>
            <person name="Kyrpides N."/>
            <person name="Mikhailova N."/>
            <person name="Hersman L."/>
            <person name="Dubois J."/>
            <person name="Maurice P."/>
            <person name="Richardson P."/>
        </authorList>
    </citation>
    <scope>NUCLEOTIDE SEQUENCE [LARGE SCALE GENOMIC DNA]</scope>
    <source>
        <strain>ymp</strain>
    </source>
</reference>
<sequence>MRIGHGYDVHRFGEGDFITLGGVRIPHKFGLVAHSDGDVLLHALSDALLGAVALGDIGKHFPDTDPTFKGADSRALLRHVMSLVRGKGYAVGNVDATIIAQAPKMAPHIQSMRERIAEDLGVELDQVNVKATTTEKLGFTGREEGIAVHAVALLVKA</sequence>
<feature type="chain" id="PRO_1000022863" description="2-C-methyl-D-erythritol 2,4-cyclodiphosphate synthase">
    <location>
        <begin position="1"/>
        <end position="157"/>
    </location>
</feature>
<feature type="binding site" evidence="1">
    <location>
        <begin position="8"/>
        <end position="10"/>
    </location>
    <ligand>
        <name>4-CDP-2-C-methyl-D-erythritol 2-phosphate</name>
        <dbReference type="ChEBI" id="CHEBI:57919"/>
    </ligand>
</feature>
<feature type="binding site" evidence="1">
    <location>
        <position position="8"/>
    </location>
    <ligand>
        <name>a divalent metal cation</name>
        <dbReference type="ChEBI" id="CHEBI:60240"/>
    </ligand>
</feature>
<feature type="binding site" evidence="1">
    <location>
        <position position="10"/>
    </location>
    <ligand>
        <name>a divalent metal cation</name>
        <dbReference type="ChEBI" id="CHEBI:60240"/>
    </ligand>
</feature>
<feature type="binding site" evidence="1">
    <location>
        <begin position="34"/>
        <end position="35"/>
    </location>
    <ligand>
        <name>4-CDP-2-C-methyl-D-erythritol 2-phosphate</name>
        <dbReference type="ChEBI" id="CHEBI:57919"/>
    </ligand>
</feature>
<feature type="binding site" evidence="1">
    <location>
        <position position="42"/>
    </location>
    <ligand>
        <name>a divalent metal cation</name>
        <dbReference type="ChEBI" id="CHEBI:60240"/>
    </ligand>
</feature>
<feature type="binding site" evidence="1">
    <location>
        <begin position="56"/>
        <end position="58"/>
    </location>
    <ligand>
        <name>4-CDP-2-C-methyl-D-erythritol 2-phosphate</name>
        <dbReference type="ChEBI" id="CHEBI:57919"/>
    </ligand>
</feature>
<feature type="binding site" evidence="1">
    <location>
        <begin position="61"/>
        <end position="65"/>
    </location>
    <ligand>
        <name>4-CDP-2-C-methyl-D-erythritol 2-phosphate</name>
        <dbReference type="ChEBI" id="CHEBI:57919"/>
    </ligand>
</feature>
<feature type="binding site" evidence="1">
    <location>
        <begin position="100"/>
        <end position="106"/>
    </location>
    <ligand>
        <name>4-CDP-2-C-methyl-D-erythritol 2-phosphate</name>
        <dbReference type="ChEBI" id="CHEBI:57919"/>
    </ligand>
</feature>
<feature type="binding site" evidence="1">
    <location>
        <begin position="132"/>
        <end position="135"/>
    </location>
    <ligand>
        <name>4-CDP-2-C-methyl-D-erythritol 2-phosphate</name>
        <dbReference type="ChEBI" id="CHEBI:57919"/>
    </ligand>
</feature>
<feature type="binding site" evidence="1">
    <location>
        <position position="139"/>
    </location>
    <ligand>
        <name>4-CDP-2-C-methyl-D-erythritol 2-phosphate</name>
        <dbReference type="ChEBI" id="CHEBI:57919"/>
    </ligand>
</feature>
<feature type="binding site" evidence="1">
    <location>
        <position position="142"/>
    </location>
    <ligand>
        <name>4-CDP-2-C-methyl-D-erythritol 2-phosphate</name>
        <dbReference type="ChEBI" id="CHEBI:57919"/>
    </ligand>
</feature>
<feature type="site" description="Transition state stabilizer" evidence="1">
    <location>
        <position position="34"/>
    </location>
</feature>
<feature type="site" description="Transition state stabilizer" evidence="1">
    <location>
        <position position="133"/>
    </location>
</feature>
<name>ISPF_ECTM1</name>